<comment type="function">
    <text evidence="1">Putative transcription factor.</text>
</comment>
<comment type="subcellular location">
    <subcellularLocation>
        <location evidence="1">Nucleus</location>
    </subcellularLocation>
</comment>
<comment type="similarity">
    <text evidence="3">Belongs to the bZIP family.</text>
</comment>
<name>KAPC_ASPCL</name>
<feature type="chain" id="PRO_0000306814" description="Putative transcription factor kapC">
    <location>
        <begin position="1"/>
        <end position="288"/>
    </location>
</feature>
<feature type="domain" description="bZIP">
    <location>
        <begin position="100"/>
        <end position="163"/>
    </location>
</feature>
<feature type="region of interest" description="Disordered" evidence="2">
    <location>
        <begin position="1"/>
        <end position="121"/>
    </location>
</feature>
<feature type="region of interest" description="Basic motif" evidence="1">
    <location>
        <begin position="101"/>
        <end position="124"/>
    </location>
</feature>
<feature type="region of interest" description="Leucine-zipper" evidence="1">
    <location>
        <begin position="128"/>
        <end position="159"/>
    </location>
</feature>
<feature type="region of interest" description="Disordered" evidence="2">
    <location>
        <begin position="172"/>
        <end position="226"/>
    </location>
</feature>
<feature type="region of interest" description="Disordered" evidence="2">
    <location>
        <begin position="242"/>
        <end position="288"/>
    </location>
</feature>
<feature type="compositionally biased region" description="Pro residues" evidence="2">
    <location>
        <begin position="1"/>
        <end position="10"/>
    </location>
</feature>
<feature type="compositionally biased region" description="Low complexity" evidence="2">
    <location>
        <begin position="26"/>
        <end position="41"/>
    </location>
</feature>
<feature type="compositionally biased region" description="Pro residues" evidence="2">
    <location>
        <begin position="42"/>
        <end position="54"/>
    </location>
</feature>
<feature type="compositionally biased region" description="Polar residues" evidence="2">
    <location>
        <begin position="84"/>
        <end position="93"/>
    </location>
</feature>
<feature type="compositionally biased region" description="Low complexity" evidence="2">
    <location>
        <begin position="106"/>
        <end position="116"/>
    </location>
</feature>
<feature type="compositionally biased region" description="Pro residues" evidence="2">
    <location>
        <begin position="202"/>
        <end position="212"/>
    </location>
</feature>
<feature type="compositionally biased region" description="Low complexity" evidence="2">
    <location>
        <begin position="213"/>
        <end position="222"/>
    </location>
</feature>
<sequence>MQPTLAPAPHPSMQTSAQDHADQVLHDQLLAAHQHLSHPQQARPPPPPPQPPHMQPTTPVARDQNNIDPAISGGAMLAGPQTPQPDLSGQESPKTYGKRPLSTSKRAAQNRAAQRAFRQRKEAHIRDLEGKVKAYETMGEAIKALQAENYQLREYIINLQSRLLDTQGEVPELPGNIDLSQPRGDIPVPAPPTSGTSTSAVPVPPPTAPQQPQPAQNQASAPNDDMNSLNRIAVAGLGMRKPPTEEANYLGNSFQQQARRVRPDDGQPDASELTLPKQEPTHGLPLIS</sequence>
<proteinExistence type="inferred from homology"/>
<dbReference type="EMBL" id="DS027048">
    <property type="protein sequence ID" value="EAW13549.1"/>
    <property type="molecule type" value="Genomic_DNA"/>
</dbReference>
<dbReference type="RefSeq" id="XP_001274975.1">
    <property type="nucleotide sequence ID" value="XM_001274974.1"/>
</dbReference>
<dbReference type="SMR" id="A1C9M5"/>
<dbReference type="GeneID" id="4707090"/>
<dbReference type="KEGG" id="act:ACLA_055970"/>
<dbReference type="eggNOG" id="ENOG502SC5V">
    <property type="taxonomic scope" value="Eukaryota"/>
</dbReference>
<dbReference type="OrthoDB" id="2593073at2759"/>
<dbReference type="Proteomes" id="UP000006701">
    <property type="component" value="Unassembled WGS sequence"/>
</dbReference>
<dbReference type="GO" id="GO:0090575">
    <property type="term" value="C:RNA polymerase II transcription regulator complex"/>
    <property type="evidence" value="ECO:0007669"/>
    <property type="project" value="TreeGrafter"/>
</dbReference>
<dbReference type="GO" id="GO:0001228">
    <property type="term" value="F:DNA-binding transcription activator activity, RNA polymerase II-specific"/>
    <property type="evidence" value="ECO:0007669"/>
    <property type="project" value="TreeGrafter"/>
</dbReference>
<dbReference type="GO" id="GO:0000976">
    <property type="term" value="F:transcription cis-regulatory region binding"/>
    <property type="evidence" value="ECO:0007669"/>
    <property type="project" value="InterPro"/>
</dbReference>
<dbReference type="Gene3D" id="1.20.5.170">
    <property type="match status" value="1"/>
</dbReference>
<dbReference type="InterPro" id="IPR050936">
    <property type="entry name" value="AP-1-like"/>
</dbReference>
<dbReference type="InterPro" id="IPR004827">
    <property type="entry name" value="bZIP"/>
</dbReference>
<dbReference type="InterPro" id="IPR046347">
    <property type="entry name" value="bZIP_sf"/>
</dbReference>
<dbReference type="PANTHER" id="PTHR40621">
    <property type="entry name" value="TRANSCRIPTION FACTOR KAPC-RELATED"/>
    <property type="match status" value="1"/>
</dbReference>
<dbReference type="PANTHER" id="PTHR40621:SF11">
    <property type="entry name" value="TRANSCRIPTION FACTOR KAPC-RELATED"/>
    <property type="match status" value="1"/>
</dbReference>
<dbReference type="Pfam" id="PF00170">
    <property type="entry name" value="bZIP_1"/>
    <property type="match status" value="1"/>
</dbReference>
<dbReference type="SMART" id="SM00338">
    <property type="entry name" value="BRLZ"/>
    <property type="match status" value="1"/>
</dbReference>
<dbReference type="SUPFAM" id="SSF57959">
    <property type="entry name" value="Leucine zipper domain"/>
    <property type="match status" value="1"/>
</dbReference>
<dbReference type="PROSITE" id="PS00036">
    <property type="entry name" value="BZIP_BASIC"/>
    <property type="match status" value="1"/>
</dbReference>
<accession>A1C9M5</accession>
<protein>
    <recommendedName>
        <fullName>Putative transcription factor kapC</fullName>
    </recommendedName>
</protein>
<evidence type="ECO:0000250" key="1"/>
<evidence type="ECO:0000256" key="2">
    <source>
        <dbReference type="SAM" id="MobiDB-lite"/>
    </source>
</evidence>
<evidence type="ECO:0000305" key="3"/>
<reference key="1">
    <citation type="journal article" date="2008" name="PLoS Genet.">
        <title>Genomic islands in the pathogenic filamentous fungus Aspergillus fumigatus.</title>
        <authorList>
            <person name="Fedorova N.D."/>
            <person name="Khaldi N."/>
            <person name="Joardar V.S."/>
            <person name="Maiti R."/>
            <person name="Amedeo P."/>
            <person name="Anderson M.J."/>
            <person name="Crabtree J."/>
            <person name="Silva J.C."/>
            <person name="Badger J.H."/>
            <person name="Albarraq A."/>
            <person name="Angiuoli S."/>
            <person name="Bussey H."/>
            <person name="Bowyer P."/>
            <person name="Cotty P.J."/>
            <person name="Dyer P.S."/>
            <person name="Egan A."/>
            <person name="Galens K."/>
            <person name="Fraser-Liggett C.M."/>
            <person name="Haas B.J."/>
            <person name="Inman J.M."/>
            <person name="Kent R."/>
            <person name="Lemieux S."/>
            <person name="Malavazi I."/>
            <person name="Orvis J."/>
            <person name="Roemer T."/>
            <person name="Ronning C.M."/>
            <person name="Sundaram J.P."/>
            <person name="Sutton G."/>
            <person name="Turner G."/>
            <person name="Venter J.C."/>
            <person name="White O.R."/>
            <person name="Whitty B.R."/>
            <person name="Youngman P."/>
            <person name="Wolfe K.H."/>
            <person name="Goldman G.H."/>
            <person name="Wortman J.R."/>
            <person name="Jiang B."/>
            <person name="Denning D.W."/>
            <person name="Nierman W.C."/>
        </authorList>
    </citation>
    <scope>NUCLEOTIDE SEQUENCE [LARGE SCALE GENOMIC DNA]</scope>
    <source>
        <strain>ATCC 1007 / CBS 513.65 / DSM 816 / NCTC 3887 / NRRL 1 / QM 1276 / 107</strain>
    </source>
</reference>
<organism>
    <name type="scientific">Aspergillus clavatus (strain ATCC 1007 / CBS 513.65 / DSM 816 / NCTC 3887 / NRRL 1 / QM 1276 / 107)</name>
    <dbReference type="NCBI Taxonomy" id="344612"/>
    <lineage>
        <taxon>Eukaryota</taxon>
        <taxon>Fungi</taxon>
        <taxon>Dikarya</taxon>
        <taxon>Ascomycota</taxon>
        <taxon>Pezizomycotina</taxon>
        <taxon>Eurotiomycetes</taxon>
        <taxon>Eurotiomycetidae</taxon>
        <taxon>Eurotiales</taxon>
        <taxon>Aspergillaceae</taxon>
        <taxon>Aspergillus</taxon>
        <taxon>Aspergillus subgen. Fumigati</taxon>
    </lineage>
</organism>
<keyword id="KW-0238">DNA-binding</keyword>
<keyword id="KW-0539">Nucleus</keyword>
<keyword id="KW-1185">Reference proteome</keyword>
<keyword id="KW-0804">Transcription</keyword>
<keyword id="KW-0805">Transcription regulation</keyword>
<gene>
    <name type="primary">kapC</name>
    <name type="ORF">ACLA_055970</name>
</gene>